<keyword id="KW-0067">ATP-binding</keyword>
<keyword id="KW-0436">Ligase</keyword>
<keyword id="KW-0547">Nucleotide-binding</keyword>
<keyword id="KW-0554">One-carbon metabolism</keyword>
<keyword id="KW-1185">Reference proteome</keyword>
<reference key="1">
    <citation type="journal article" date="2002" name="Proc. Natl. Acad. Sci. U.S.A.">
        <title>Complete genome sequence and comparative genomic analysis of an emerging human pathogen, serotype V Streptococcus agalactiae.</title>
        <authorList>
            <person name="Tettelin H."/>
            <person name="Masignani V."/>
            <person name="Cieslewicz M.J."/>
            <person name="Eisen J.A."/>
            <person name="Peterson S.N."/>
            <person name="Wessels M.R."/>
            <person name="Paulsen I.T."/>
            <person name="Nelson K.E."/>
            <person name="Margarit I."/>
            <person name="Read T.D."/>
            <person name="Madoff L.C."/>
            <person name="Wolf A.M."/>
            <person name="Beanan M.J."/>
            <person name="Brinkac L.M."/>
            <person name="Daugherty S.C."/>
            <person name="DeBoy R.T."/>
            <person name="Durkin A.S."/>
            <person name="Kolonay J.F."/>
            <person name="Madupu R."/>
            <person name="Lewis M.R."/>
            <person name="Radune D."/>
            <person name="Fedorova N.B."/>
            <person name="Scanlan D."/>
            <person name="Khouri H.M."/>
            <person name="Mulligan S."/>
            <person name="Carty H.A."/>
            <person name="Cline R.T."/>
            <person name="Van Aken S.E."/>
            <person name="Gill J."/>
            <person name="Scarselli M."/>
            <person name="Mora M."/>
            <person name="Iacobini E.T."/>
            <person name="Brettoni C."/>
            <person name="Galli G."/>
            <person name="Mariani M."/>
            <person name="Vegni F."/>
            <person name="Maione D."/>
            <person name="Rinaudo D."/>
            <person name="Rappuoli R."/>
            <person name="Telford J.L."/>
            <person name="Kasper D.L."/>
            <person name="Grandi G."/>
            <person name="Fraser C.M."/>
        </authorList>
    </citation>
    <scope>NUCLEOTIDE SEQUENCE [LARGE SCALE GENOMIC DNA]</scope>
    <source>
        <strain>ATCC BAA-611 / 2603 V/R</strain>
    </source>
</reference>
<evidence type="ECO:0000255" key="1">
    <source>
        <dbReference type="HAMAP-Rule" id="MF_01543"/>
    </source>
</evidence>
<proteinExistence type="inferred from homology"/>
<gene>
    <name evidence="1" type="primary">fhs</name>
    <name type="ordered locus">SAG1055</name>
</gene>
<organism>
    <name type="scientific">Streptococcus agalactiae serotype V (strain ATCC BAA-611 / 2603 V/R)</name>
    <dbReference type="NCBI Taxonomy" id="208435"/>
    <lineage>
        <taxon>Bacteria</taxon>
        <taxon>Bacillati</taxon>
        <taxon>Bacillota</taxon>
        <taxon>Bacilli</taxon>
        <taxon>Lactobacillales</taxon>
        <taxon>Streptococcaceae</taxon>
        <taxon>Streptococcus</taxon>
    </lineage>
</organism>
<feature type="chain" id="PRO_0000199385" description="Formate--tetrahydrofolate ligase">
    <location>
        <begin position="1"/>
        <end position="556"/>
    </location>
</feature>
<feature type="binding site" evidence="1">
    <location>
        <begin position="65"/>
        <end position="72"/>
    </location>
    <ligand>
        <name>ATP</name>
        <dbReference type="ChEBI" id="CHEBI:30616"/>
    </ligand>
</feature>
<comment type="catalytic activity">
    <reaction evidence="1">
        <text>(6S)-5,6,7,8-tetrahydrofolate + formate + ATP = (6R)-10-formyltetrahydrofolate + ADP + phosphate</text>
        <dbReference type="Rhea" id="RHEA:20221"/>
        <dbReference type="ChEBI" id="CHEBI:15740"/>
        <dbReference type="ChEBI" id="CHEBI:30616"/>
        <dbReference type="ChEBI" id="CHEBI:43474"/>
        <dbReference type="ChEBI" id="CHEBI:57453"/>
        <dbReference type="ChEBI" id="CHEBI:195366"/>
        <dbReference type="ChEBI" id="CHEBI:456216"/>
        <dbReference type="EC" id="6.3.4.3"/>
    </reaction>
</comment>
<comment type="pathway">
    <text evidence="1">One-carbon metabolism; tetrahydrofolate interconversion.</text>
</comment>
<comment type="similarity">
    <text evidence="1">Belongs to the formate--tetrahydrofolate ligase family.</text>
</comment>
<dbReference type="EC" id="6.3.4.3" evidence="1"/>
<dbReference type="EMBL" id="AE009948">
    <property type="protein sequence ID" value="AAM99936.1"/>
    <property type="molecule type" value="Genomic_DNA"/>
</dbReference>
<dbReference type="RefSeq" id="NP_688064.1">
    <property type="nucleotide sequence ID" value="NC_004116.1"/>
</dbReference>
<dbReference type="RefSeq" id="WP_000845308.1">
    <property type="nucleotide sequence ID" value="NC_004116.1"/>
</dbReference>
<dbReference type="SMR" id="Q8DZP5"/>
<dbReference type="STRING" id="208435.SAG1055"/>
<dbReference type="KEGG" id="sag:SAG1055"/>
<dbReference type="PATRIC" id="fig|208435.3.peg.1065"/>
<dbReference type="HOGENOM" id="CLU_003601_3_3_9"/>
<dbReference type="OrthoDB" id="9761733at2"/>
<dbReference type="UniPathway" id="UPA00193"/>
<dbReference type="Proteomes" id="UP000000821">
    <property type="component" value="Chromosome"/>
</dbReference>
<dbReference type="GO" id="GO:0005524">
    <property type="term" value="F:ATP binding"/>
    <property type="evidence" value="ECO:0007669"/>
    <property type="project" value="UniProtKB-UniRule"/>
</dbReference>
<dbReference type="GO" id="GO:0004329">
    <property type="term" value="F:formate-tetrahydrofolate ligase activity"/>
    <property type="evidence" value="ECO:0007669"/>
    <property type="project" value="UniProtKB-UniRule"/>
</dbReference>
<dbReference type="GO" id="GO:0035999">
    <property type="term" value="P:tetrahydrofolate interconversion"/>
    <property type="evidence" value="ECO:0007669"/>
    <property type="project" value="UniProtKB-UniRule"/>
</dbReference>
<dbReference type="CDD" id="cd00477">
    <property type="entry name" value="FTHFS"/>
    <property type="match status" value="1"/>
</dbReference>
<dbReference type="FunFam" id="3.30.1510.10:FF:000001">
    <property type="entry name" value="Formate--tetrahydrofolate ligase"/>
    <property type="match status" value="1"/>
</dbReference>
<dbReference type="FunFam" id="3.10.410.10:FF:000001">
    <property type="entry name" value="Putative formate--tetrahydrofolate ligase"/>
    <property type="match status" value="1"/>
</dbReference>
<dbReference type="Gene3D" id="3.30.1510.10">
    <property type="entry name" value="Domain 2, N(10)-formyltetrahydrofolate synthetase"/>
    <property type="match status" value="1"/>
</dbReference>
<dbReference type="Gene3D" id="3.10.410.10">
    <property type="entry name" value="Formyltetrahydrofolate synthetase, domain 3"/>
    <property type="match status" value="1"/>
</dbReference>
<dbReference type="Gene3D" id="3.40.50.300">
    <property type="entry name" value="P-loop containing nucleotide triphosphate hydrolases"/>
    <property type="match status" value="1"/>
</dbReference>
<dbReference type="HAMAP" id="MF_01543">
    <property type="entry name" value="FTHFS"/>
    <property type="match status" value="1"/>
</dbReference>
<dbReference type="InterPro" id="IPR000559">
    <property type="entry name" value="Formate_THF_ligase"/>
</dbReference>
<dbReference type="InterPro" id="IPR020628">
    <property type="entry name" value="Formate_THF_ligase_CS"/>
</dbReference>
<dbReference type="InterPro" id="IPR027417">
    <property type="entry name" value="P-loop_NTPase"/>
</dbReference>
<dbReference type="NCBIfam" id="NF010030">
    <property type="entry name" value="PRK13505.1"/>
    <property type="match status" value="1"/>
</dbReference>
<dbReference type="Pfam" id="PF01268">
    <property type="entry name" value="FTHFS"/>
    <property type="match status" value="1"/>
</dbReference>
<dbReference type="SUPFAM" id="SSF52540">
    <property type="entry name" value="P-loop containing nucleoside triphosphate hydrolases"/>
    <property type="match status" value="1"/>
</dbReference>
<dbReference type="PROSITE" id="PS00721">
    <property type="entry name" value="FTHFS_1"/>
    <property type="match status" value="1"/>
</dbReference>
<dbReference type="PROSITE" id="PS00722">
    <property type="entry name" value="FTHFS_2"/>
    <property type="match status" value="1"/>
</dbReference>
<name>FTHS_STRA5</name>
<sequence>MKTDIEIAQSVALKPIAEIVEQVGIGFDDIELYGKYKAKLSFDKIEAVKSQKVGKLILVTAINPTPAGEGKSTMSIGLADALNKIGKKTMIALREPSLGPVMGIKGGAAGGGYAQVLPMEDINLHFTGDMHAITTANNALSALLDNHIHQGNELDIDQRRVIWKRVVDLNDRALRQVIVGLGSPVNGIPREDGFDITVASEIMAILCLATDLSDLKKRLSNIVVAYSRNRKPIYVKDLKIEGALTLILKDTIKPNLVQTIYGTPALVHGGPFANIAHGCNSVLATSTALRLADYVVTEAGFGADLGAEKFLDIKTPNLPTSPDAIVIVATLRALKMHGGVSKEDLSQENVEAVKRGFTNLERHVNNMRQYGVPVVVAINQFTADTESEIATLKTLCSNIDVAVELASVWEDGADGGLELAQTVANVIETQSSNYKRLYNDEDTIEEKIKKIVTKIYGGNKVHFGPKAQIQLKEFSDNGWDKMPICMAKTQYSFSDNPNLLGAPTDFDITVREFVPKTGAGFIVALTGDVLTMPGLPKKPAALNMDVLEDGTAIGLF</sequence>
<accession>Q8DZP5</accession>
<protein>
    <recommendedName>
        <fullName evidence="1">Formate--tetrahydrofolate ligase</fullName>
        <ecNumber evidence="1">6.3.4.3</ecNumber>
    </recommendedName>
    <alternativeName>
        <fullName evidence="1">Formyltetrahydrofolate synthetase</fullName>
        <shortName evidence="1">FHS</shortName>
        <shortName evidence="1">FTHFS</shortName>
    </alternativeName>
</protein>